<reference key="1">
    <citation type="submission" date="2008-06" db="EMBL/GenBank/DDBJ databases">
        <title>Complete sequence of Chloroherpeton thalassium ATCC 35110.</title>
        <authorList>
            <consortium name="US DOE Joint Genome Institute"/>
            <person name="Lucas S."/>
            <person name="Copeland A."/>
            <person name="Lapidus A."/>
            <person name="Glavina del Rio T."/>
            <person name="Dalin E."/>
            <person name="Tice H."/>
            <person name="Bruce D."/>
            <person name="Goodwin L."/>
            <person name="Pitluck S."/>
            <person name="Schmutz J."/>
            <person name="Larimer F."/>
            <person name="Land M."/>
            <person name="Hauser L."/>
            <person name="Kyrpides N."/>
            <person name="Mikhailova N."/>
            <person name="Liu Z."/>
            <person name="Li T."/>
            <person name="Zhao F."/>
            <person name="Overmann J."/>
            <person name="Bryant D.A."/>
            <person name="Richardson P."/>
        </authorList>
    </citation>
    <scope>NUCLEOTIDE SEQUENCE [LARGE SCALE GENOMIC DNA]</scope>
    <source>
        <strain>ATCC 35110 / GB-78</strain>
    </source>
</reference>
<gene>
    <name evidence="1" type="primary">yidC</name>
    <name type="ordered locus">Ctha_2730</name>
</gene>
<evidence type="ECO:0000255" key="1">
    <source>
        <dbReference type="HAMAP-Rule" id="MF_01810"/>
    </source>
</evidence>
<feature type="chain" id="PRO_1000187651" description="Membrane protein insertase YidC">
    <location>
        <begin position="1"/>
        <end position="586"/>
    </location>
</feature>
<feature type="transmembrane region" description="Helical" evidence="1">
    <location>
        <begin position="5"/>
        <end position="25"/>
    </location>
</feature>
<feature type="transmembrane region" description="Helical" evidence="1">
    <location>
        <begin position="371"/>
        <end position="391"/>
    </location>
</feature>
<feature type="transmembrane region" description="Helical" evidence="1">
    <location>
        <begin position="436"/>
        <end position="456"/>
    </location>
</feature>
<feature type="transmembrane region" description="Helical" evidence="1">
    <location>
        <begin position="486"/>
        <end position="506"/>
    </location>
</feature>
<feature type="transmembrane region" description="Helical" evidence="1">
    <location>
        <begin position="522"/>
        <end position="542"/>
    </location>
</feature>
<dbReference type="EMBL" id="CP001100">
    <property type="protein sequence ID" value="ACF15179.1"/>
    <property type="molecule type" value="Genomic_DNA"/>
</dbReference>
<dbReference type="RefSeq" id="WP_012501261.1">
    <property type="nucleotide sequence ID" value="NC_011026.1"/>
</dbReference>
<dbReference type="SMR" id="B3QYV6"/>
<dbReference type="STRING" id="517418.Ctha_2730"/>
<dbReference type="KEGG" id="cts:Ctha_2730"/>
<dbReference type="eggNOG" id="COG0706">
    <property type="taxonomic scope" value="Bacteria"/>
</dbReference>
<dbReference type="HOGENOM" id="CLU_016535_2_0_10"/>
<dbReference type="OrthoDB" id="9780552at2"/>
<dbReference type="Proteomes" id="UP000001208">
    <property type="component" value="Chromosome"/>
</dbReference>
<dbReference type="GO" id="GO:0005886">
    <property type="term" value="C:plasma membrane"/>
    <property type="evidence" value="ECO:0007669"/>
    <property type="project" value="UniProtKB-SubCell"/>
</dbReference>
<dbReference type="GO" id="GO:0032977">
    <property type="term" value="F:membrane insertase activity"/>
    <property type="evidence" value="ECO:0007669"/>
    <property type="project" value="InterPro"/>
</dbReference>
<dbReference type="GO" id="GO:0051205">
    <property type="term" value="P:protein insertion into membrane"/>
    <property type="evidence" value="ECO:0007669"/>
    <property type="project" value="TreeGrafter"/>
</dbReference>
<dbReference type="GO" id="GO:0015031">
    <property type="term" value="P:protein transport"/>
    <property type="evidence" value="ECO:0007669"/>
    <property type="project" value="UniProtKB-KW"/>
</dbReference>
<dbReference type="CDD" id="cd20070">
    <property type="entry name" value="5TM_YidC_Alb3"/>
    <property type="match status" value="1"/>
</dbReference>
<dbReference type="CDD" id="cd19961">
    <property type="entry name" value="EcYidC-like_peri"/>
    <property type="match status" value="1"/>
</dbReference>
<dbReference type="Gene3D" id="2.70.98.90">
    <property type="match status" value="1"/>
</dbReference>
<dbReference type="HAMAP" id="MF_01810">
    <property type="entry name" value="YidC_type1"/>
    <property type="match status" value="1"/>
</dbReference>
<dbReference type="InterPro" id="IPR019998">
    <property type="entry name" value="Membr_insert_YidC"/>
</dbReference>
<dbReference type="InterPro" id="IPR028053">
    <property type="entry name" value="Membr_insert_YidC_N"/>
</dbReference>
<dbReference type="InterPro" id="IPR001708">
    <property type="entry name" value="YidC/ALB3/OXA1/COX18"/>
</dbReference>
<dbReference type="InterPro" id="IPR028055">
    <property type="entry name" value="YidC/Oxa/ALB_C"/>
</dbReference>
<dbReference type="InterPro" id="IPR047196">
    <property type="entry name" value="YidC_ALB_C"/>
</dbReference>
<dbReference type="InterPro" id="IPR038221">
    <property type="entry name" value="YidC_periplasmic_sf"/>
</dbReference>
<dbReference type="NCBIfam" id="TIGR03593">
    <property type="entry name" value="yidC_nterm"/>
    <property type="match status" value="1"/>
</dbReference>
<dbReference type="NCBIfam" id="TIGR03592">
    <property type="entry name" value="yidC_oxa1_cterm"/>
    <property type="match status" value="1"/>
</dbReference>
<dbReference type="PANTHER" id="PTHR12428:SF65">
    <property type="entry name" value="CYTOCHROME C OXIDASE ASSEMBLY PROTEIN COX18, MITOCHONDRIAL"/>
    <property type="match status" value="1"/>
</dbReference>
<dbReference type="PANTHER" id="PTHR12428">
    <property type="entry name" value="OXA1"/>
    <property type="match status" value="1"/>
</dbReference>
<dbReference type="Pfam" id="PF02096">
    <property type="entry name" value="60KD_IMP"/>
    <property type="match status" value="1"/>
</dbReference>
<dbReference type="Pfam" id="PF14849">
    <property type="entry name" value="YidC_periplas"/>
    <property type="match status" value="1"/>
</dbReference>
<dbReference type="PRINTS" id="PR00701">
    <property type="entry name" value="60KDINNERMP"/>
</dbReference>
<dbReference type="PRINTS" id="PR01900">
    <property type="entry name" value="YIDCPROTEIN"/>
</dbReference>
<sequence length="586" mass="66420">MDRNTLIGLVLIALIMMAWFQLMAPKKPLPEEKAQQERLEAVAESIDIKNQLVQDSLQKANPTQKFGELGQFAVGEEKKIQIETDLFTATLSTKGATLRSFIQKDYLNYKHEPFNLISNEDGTLSLFFATRDGKVVNTGELYFDPKTDQKNFRISGDNKVRIPFEISTEDGRRIEITYIFSGNSYEFGYETNLAGFGKFVSGNEYQVVWTGGLSNAEKNVNDEATNSYAEAYLGGSTLRLDASHVDETYKEQPSGNAKWVAVRSKYFVAGLISKEETEGVFMEGSRNTNDEKSVFEDYMVALKLKLPSDQTTVNSRFSVYIGPLKYDLVKATGSELEKIIDFGWEWVTRPFAEYLIIPIFNFLNNHVDSYGVIIILFALFIKLVTYPLTMASTKSMKKMAALQPQLKAIQEQYKDNPEKLQAEISGIYREAGVNPLGGCLPTVIQMPLLFAMFYVFRSSIQLRQEGFLWSNDLSVPDSILDLPFSIPLYGDHVSVIPILMGVAVFFQQKLTPSTQTNDQMKFMMYLFPGMMLIFFNNMPSGLGLYYLMFNVFSIAQQFYINQTTETEPVVLKDKSKQKAKPARKKK</sequence>
<proteinExistence type="inferred from homology"/>
<organism>
    <name type="scientific">Chloroherpeton thalassium (strain ATCC 35110 / GB-78)</name>
    <dbReference type="NCBI Taxonomy" id="517418"/>
    <lineage>
        <taxon>Bacteria</taxon>
        <taxon>Pseudomonadati</taxon>
        <taxon>Chlorobiota</taxon>
        <taxon>Chlorobiia</taxon>
        <taxon>Chlorobiales</taxon>
        <taxon>Chloroherpetonaceae</taxon>
        <taxon>Chloroherpeton</taxon>
    </lineage>
</organism>
<protein>
    <recommendedName>
        <fullName evidence="1">Membrane protein insertase YidC</fullName>
    </recommendedName>
    <alternativeName>
        <fullName evidence="1">Foldase YidC</fullName>
    </alternativeName>
    <alternativeName>
        <fullName evidence="1">Membrane integrase YidC</fullName>
    </alternativeName>
    <alternativeName>
        <fullName evidence="1">Membrane protein YidC</fullName>
    </alternativeName>
</protein>
<comment type="function">
    <text evidence="1">Required for the insertion and/or proper folding and/or complex formation of integral membrane proteins into the membrane. Involved in integration of membrane proteins that insert both dependently and independently of the Sec translocase complex, as well as at least some lipoproteins. Aids folding of multispanning membrane proteins.</text>
</comment>
<comment type="subunit">
    <text evidence="1">Interacts with the Sec translocase complex via SecD. Specifically interacts with transmembrane segments of nascent integral membrane proteins during membrane integration.</text>
</comment>
<comment type="subcellular location">
    <subcellularLocation>
        <location evidence="1">Cell inner membrane</location>
        <topology evidence="1">Multi-pass membrane protein</topology>
    </subcellularLocation>
</comment>
<comment type="similarity">
    <text evidence="1">Belongs to the OXA1/ALB3/YidC family. Type 1 subfamily.</text>
</comment>
<name>YIDC_CHLT3</name>
<accession>B3QYV6</accession>
<keyword id="KW-0997">Cell inner membrane</keyword>
<keyword id="KW-1003">Cell membrane</keyword>
<keyword id="KW-0143">Chaperone</keyword>
<keyword id="KW-0472">Membrane</keyword>
<keyword id="KW-0653">Protein transport</keyword>
<keyword id="KW-1185">Reference proteome</keyword>
<keyword id="KW-0812">Transmembrane</keyword>
<keyword id="KW-1133">Transmembrane helix</keyword>
<keyword id="KW-0813">Transport</keyword>